<accession>Q2YXU8</accession>
<dbReference type="EC" id="5.3.1.24" evidence="1"/>
<dbReference type="EMBL" id="AJ938182">
    <property type="protein sequence ID" value="CAI80915.1"/>
    <property type="molecule type" value="Genomic_DNA"/>
</dbReference>
<dbReference type="RefSeq" id="WP_000768177.1">
    <property type="nucleotide sequence ID" value="NC_007622.1"/>
</dbReference>
<dbReference type="SMR" id="Q2YXU8"/>
<dbReference type="KEGG" id="sab:SAB1226"/>
<dbReference type="HOGENOM" id="CLU_076364_1_1_9"/>
<dbReference type="UniPathway" id="UPA00035">
    <property type="reaction ID" value="UER00042"/>
</dbReference>
<dbReference type="GO" id="GO:0004640">
    <property type="term" value="F:phosphoribosylanthranilate isomerase activity"/>
    <property type="evidence" value="ECO:0007669"/>
    <property type="project" value="UniProtKB-UniRule"/>
</dbReference>
<dbReference type="GO" id="GO:0000162">
    <property type="term" value="P:L-tryptophan biosynthetic process"/>
    <property type="evidence" value="ECO:0007669"/>
    <property type="project" value="UniProtKB-UniRule"/>
</dbReference>
<dbReference type="CDD" id="cd00405">
    <property type="entry name" value="PRAI"/>
    <property type="match status" value="1"/>
</dbReference>
<dbReference type="FunFam" id="3.20.20.70:FF:000277">
    <property type="entry name" value="Phosphoribosylanthranilate isomerase"/>
    <property type="match status" value="1"/>
</dbReference>
<dbReference type="Gene3D" id="3.20.20.70">
    <property type="entry name" value="Aldolase class I"/>
    <property type="match status" value="1"/>
</dbReference>
<dbReference type="HAMAP" id="MF_00135">
    <property type="entry name" value="PRAI"/>
    <property type="match status" value="1"/>
</dbReference>
<dbReference type="InterPro" id="IPR013785">
    <property type="entry name" value="Aldolase_TIM"/>
</dbReference>
<dbReference type="InterPro" id="IPR001240">
    <property type="entry name" value="PRAI_dom"/>
</dbReference>
<dbReference type="InterPro" id="IPR011060">
    <property type="entry name" value="RibuloseP-bd_barrel"/>
</dbReference>
<dbReference type="InterPro" id="IPR044643">
    <property type="entry name" value="TrpF_fam"/>
</dbReference>
<dbReference type="NCBIfam" id="NF010563">
    <property type="entry name" value="PRK13958.1"/>
    <property type="match status" value="1"/>
</dbReference>
<dbReference type="PANTHER" id="PTHR42894">
    <property type="entry name" value="N-(5'-PHOSPHORIBOSYL)ANTHRANILATE ISOMERASE"/>
    <property type="match status" value="1"/>
</dbReference>
<dbReference type="PANTHER" id="PTHR42894:SF1">
    <property type="entry name" value="N-(5'-PHOSPHORIBOSYL)ANTHRANILATE ISOMERASE"/>
    <property type="match status" value="1"/>
</dbReference>
<dbReference type="Pfam" id="PF00697">
    <property type="entry name" value="PRAI"/>
    <property type="match status" value="1"/>
</dbReference>
<dbReference type="SUPFAM" id="SSF51366">
    <property type="entry name" value="Ribulose-phoshate binding barrel"/>
    <property type="match status" value="1"/>
</dbReference>
<name>TRPF_STAAB</name>
<gene>
    <name evidence="1" type="primary">trpF</name>
    <name type="ordered locus">SAB1226</name>
</gene>
<sequence length="210" mass="23312">MKLKFCGFTSIEDVTAASQLPIDAIGFIHYEKSKSHQTITQIKKLASAVPEHIDKVCVVVNPDLTTIEHVLSNTPINTIQLHGTESIDFIQEIKKKYSSIKITKALAADENIIQNINKYKGFVDLFIIDTPSVSYGGTGQTYDWTILKHIKDIPYLIAGGINSENIQTVNQLKLSHQGFDLASGIEVNGRKDIEKMTAIVNIVKGDRENE</sequence>
<protein>
    <recommendedName>
        <fullName evidence="1">N-(5'-phosphoribosyl)anthranilate isomerase</fullName>
        <shortName evidence="1">PRAI</shortName>
        <ecNumber evidence="1">5.3.1.24</ecNumber>
    </recommendedName>
</protein>
<evidence type="ECO:0000255" key="1">
    <source>
        <dbReference type="HAMAP-Rule" id="MF_00135"/>
    </source>
</evidence>
<proteinExistence type="inferred from homology"/>
<organism>
    <name type="scientific">Staphylococcus aureus (strain bovine RF122 / ET3-1)</name>
    <dbReference type="NCBI Taxonomy" id="273036"/>
    <lineage>
        <taxon>Bacteria</taxon>
        <taxon>Bacillati</taxon>
        <taxon>Bacillota</taxon>
        <taxon>Bacilli</taxon>
        <taxon>Bacillales</taxon>
        <taxon>Staphylococcaceae</taxon>
        <taxon>Staphylococcus</taxon>
    </lineage>
</organism>
<feature type="chain" id="PRO_1000197119" description="N-(5'-phosphoribosyl)anthranilate isomerase">
    <location>
        <begin position="1"/>
        <end position="210"/>
    </location>
</feature>
<keyword id="KW-0028">Amino-acid biosynthesis</keyword>
<keyword id="KW-0057">Aromatic amino acid biosynthesis</keyword>
<keyword id="KW-0413">Isomerase</keyword>
<keyword id="KW-0822">Tryptophan biosynthesis</keyword>
<reference key="1">
    <citation type="journal article" date="2007" name="PLoS ONE">
        <title>Molecular correlates of host specialization in Staphylococcus aureus.</title>
        <authorList>
            <person name="Herron-Olson L."/>
            <person name="Fitzgerald J.R."/>
            <person name="Musser J.M."/>
            <person name="Kapur V."/>
        </authorList>
    </citation>
    <scope>NUCLEOTIDE SEQUENCE [LARGE SCALE GENOMIC DNA]</scope>
    <source>
        <strain>bovine RF122 / ET3-1</strain>
    </source>
</reference>
<comment type="catalytic activity">
    <reaction evidence="1">
        <text>N-(5-phospho-beta-D-ribosyl)anthranilate = 1-(2-carboxyphenylamino)-1-deoxy-D-ribulose 5-phosphate</text>
        <dbReference type="Rhea" id="RHEA:21540"/>
        <dbReference type="ChEBI" id="CHEBI:18277"/>
        <dbReference type="ChEBI" id="CHEBI:58613"/>
        <dbReference type="EC" id="5.3.1.24"/>
    </reaction>
</comment>
<comment type="pathway">
    <text evidence="1">Amino-acid biosynthesis; L-tryptophan biosynthesis; L-tryptophan from chorismate: step 3/5.</text>
</comment>
<comment type="similarity">
    <text evidence="1">Belongs to the TrpF family.</text>
</comment>